<organism>
    <name type="scientific">Escherichia coli O9:H4 (strain HS)</name>
    <dbReference type="NCBI Taxonomy" id="331112"/>
    <lineage>
        <taxon>Bacteria</taxon>
        <taxon>Pseudomonadati</taxon>
        <taxon>Pseudomonadota</taxon>
        <taxon>Gammaproteobacteria</taxon>
        <taxon>Enterobacterales</taxon>
        <taxon>Enterobacteriaceae</taxon>
        <taxon>Escherichia</taxon>
    </lineage>
</organism>
<protein>
    <recommendedName>
        <fullName evidence="1">Hydroxylamine reductase</fullName>
        <ecNumber evidence="1">1.7.99.1</ecNumber>
    </recommendedName>
    <alternativeName>
        <fullName evidence="1">Hybrid-cluster protein</fullName>
        <shortName evidence="1">HCP</shortName>
    </alternativeName>
    <alternativeName>
        <fullName evidence="1">Prismane protein</fullName>
    </alternativeName>
</protein>
<dbReference type="EC" id="1.7.99.1" evidence="1"/>
<dbReference type="EMBL" id="CP000802">
    <property type="protein sequence ID" value="ABV05331.1"/>
    <property type="molecule type" value="Genomic_DNA"/>
</dbReference>
<dbReference type="RefSeq" id="WP_000458809.1">
    <property type="nucleotide sequence ID" value="NC_009800.1"/>
</dbReference>
<dbReference type="SMR" id="A7ZYH7"/>
<dbReference type="KEGG" id="ecx:EcHS_A0977"/>
<dbReference type="HOGENOM" id="CLU_038344_2_0_6"/>
<dbReference type="GO" id="GO:0005737">
    <property type="term" value="C:cytoplasm"/>
    <property type="evidence" value="ECO:0007669"/>
    <property type="project" value="UniProtKB-SubCell"/>
</dbReference>
<dbReference type="GO" id="GO:0051537">
    <property type="term" value="F:2 iron, 2 sulfur cluster binding"/>
    <property type="evidence" value="ECO:0007669"/>
    <property type="project" value="UniProtKB-KW"/>
</dbReference>
<dbReference type="GO" id="GO:0050418">
    <property type="term" value="F:hydroxylamine reductase activity"/>
    <property type="evidence" value="ECO:0007669"/>
    <property type="project" value="UniProtKB-UniRule"/>
</dbReference>
<dbReference type="GO" id="GO:0046872">
    <property type="term" value="F:metal ion binding"/>
    <property type="evidence" value="ECO:0007669"/>
    <property type="project" value="UniProtKB-KW"/>
</dbReference>
<dbReference type="GO" id="GO:0004601">
    <property type="term" value="F:peroxidase activity"/>
    <property type="evidence" value="ECO:0007669"/>
    <property type="project" value="TreeGrafter"/>
</dbReference>
<dbReference type="GO" id="GO:0042542">
    <property type="term" value="P:response to hydrogen peroxide"/>
    <property type="evidence" value="ECO:0007669"/>
    <property type="project" value="TreeGrafter"/>
</dbReference>
<dbReference type="CDD" id="cd01914">
    <property type="entry name" value="HCP"/>
    <property type="match status" value="1"/>
</dbReference>
<dbReference type="FunFam" id="1.20.1270.20:FF:000001">
    <property type="entry name" value="Hydroxylamine reductase"/>
    <property type="match status" value="1"/>
</dbReference>
<dbReference type="FunFam" id="1.20.1270.20:FF:000002">
    <property type="entry name" value="Hydroxylamine reductase"/>
    <property type="match status" value="1"/>
</dbReference>
<dbReference type="FunFam" id="3.40.50.2030:FF:000001">
    <property type="entry name" value="Hydroxylamine reductase"/>
    <property type="match status" value="1"/>
</dbReference>
<dbReference type="FunFam" id="3.40.50.2030:FF:000002">
    <property type="entry name" value="Hydroxylamine reductase"/>
    <property type="match status" value="1"/>
</dbReference>
<dbReference type="Gene3D" id="1.20.1270.20">
    <property type="match status" value="2"/>
</dbReference>
<dbReference type="Gene3D" id="3.40.50.2030">
    <property type="match status" value="2"/>
</dbReference>
<dbReference type="HAMAP" id="MF_00069">
    <property type="entry name" value="Hydroxylam_reduct"/>
    <property type="match status" value="1"/>
</dbReference>
<dbReference type="InterPro" id="IPR004137">
    <property type="entry name" value="HCP/CODH"/>
</dbReference>
<dbReference type="InterPro" id="IPR010048">
    <property type="entry name" value="Hydroxylam_reduct"/>
</dbReference>
<dbReference type="InterPro" id="IPR016099">
    <property type="entry name" value="Prismane-like_a/b-sand"/>
</dbReference>
<dbReference type="InterPro" id="IPR011254">
    <property type="entry name" value="Prismane-like_sf"/>
</dbReference>
<dbReference type="InterPro" id="IPR016100">
    <property type="entry name" value="Prismane_a-bundle"/>
</dbReference>
<dbReference type="NCBIfam" id="TIGR01703">
    <property type="entry name" value="hybrid_clust"/>
    <property type="match status" value="1"/>
</dbReference>
<dbReference type="NCBIfam" id="NF003658">
    <property type="entry name" value="PRK05290.1"/>
    <property type="match status" value="1"/>
</dbReference>
<dbReference type="PANTHER" id="PTHR30109">
    <property type="entry name" value="HYDROXYLAMINE REDUCTASE"/>
    <property type="match status" value="1"/>
</dbReference>
<dbReference type="PANTHER" id="PTHR30109:SF0">
    <property type="entry name" value="HYDROXYLAMINE REDUCTASE"/>
    <property type="match status" value="1"/>
</dbReference>
<dbReference type="Pfam" id="PF03063">
    <property type="entry name" value="Prismane"/>
    <property type="match status" value="1"/>
</dbReference>
<dbReference type="PIRSF" id="PIRSF000076">
    <property type="entry name" value="HCP"/>
    <property type="match status" value="1"/>
</dbReference>
<dbReference type="SUPFAM" id="SSF56821">
    <property type="entry name" value="Prismane protein-like"/>
    <property type="match status" value="1"/>
</dbReference>
<feature type="chain" id="PRO_1000071173" description="Hydroxylamine reductase">
    <location>
        <begin position="1"/>
        <end position="550"/>
    </location>
</feature>
<feature type="binding site" evidence="1">
    <location>
        <position position="3"/>
    </location>
    <ligand>
        <name>[2Fe-2S] cluster</name>
        <dbReference type="ChEBI" id="CHEBI:190135"/>
    </ligand>
</feature>
<feature type="binding site" evidence="1">
    <location>
        <position position="6"/>
    </location>
    <ligand>
        <name>[2Fe-2S] cluster</name>
        <dbReference type="ChEBI" id="CHEBI:190135"/>
    </ligand>
</feature>
<feature type="binding site" evidence="1">
    <location>
        <position position="18"/>
    </location>
    <ligand>
        <name>[2Fe-2S] cluster</name>
        <dbReference type="ChEBI" id="CHEBI:190135"/>
    </ligand>
</feature>
<feature type="binding site" evidence="1">
    <location>
        <position position="25"/>
    </location>
    <ligand>
        <name>[2Fe-2S] cluster</name>
        <dbReference type="ChEBI" id="CHEBI:190135"/>
    </ligand>
</feature>
<feature type="binding site" evidence="1">
    <location>
        <position position="249"/>
    </location>
    <ligand>
        <name>hybrid [4Fe-2O-2S] cluster</name>
        <dbReference type="ChEBI" id="CHEBI:60519"/>
    </ligand>
</feature>
<feature type="binding site" evidence="1">
    <location>
        <position position="273"/>
    </location>
    <ligand>
        <name>hybrid [4Fe-2O-2S] cluster</name>
        <dbReference type="ChEBI" id="CHEBI:60519"/>
    </ligand>
</feature>
<feature type="binding site" evidence="1">
    <location>
        <position position="317"/>
    </location>
    <ligand>
        <name>hybrid [4Fe-2O-2S] cluster</name>
        <dbReference type="ChEBI" id="CHEBI:60519"/>
    </ligand>
</feature>
<feature type="binding site" description="via persulfide group" evidence="1">
    <location>
        <position position="405"/>
    </location>
    <ligand>
        <name>hybrid [4Fe-2O-2S] cluster</name>
        <dbReference type="ChEBI" id="CHEBI:60519"/>
    </ligand>
</feature>
<feature type="binding site" evidence="1">
    <location>
        <position position="433"/>
    </location>
    <ligand>
        <name>hybrid [4Fe-2O-2S] cluster</name>
        <dbReference type="ChEBI" id="CHEBI:60519"/>
    </ligand>
</feature>
<feature type="binding site" evidence="1">
    <location>
        <position position="458"/>
    </location>
    <ligand>
        <name>hybrid [4Fe-2O-2S] cluster</name>
        <dbReference type="ChEBI" id="CHEBI:60519"/>
    </ligand>
</feature>
<feature type="binding site" evidence="1">
    <location>
        <position position="492"/>
    </location>
    <ligand>
        <name>hybrid [4Fe-2O-2S] cluster</name>
        <dbReference type="ChEBI" id="CHEBI:60519"/>
    </ligand>
</feature>
<feature type="binding site" evidence="1">
    <location>
        <position position="494"/>
    </location>
    <ligand>
        <name>hybrid [4Fe-2O-2S] cluster</name>
        <dbReference type="ChEBI" id="CHEBI:60519"/>
    </ligand>
</feature>
<feature type="modified residue" description="Cysteine persulfide" evidence="1">
    <location>
        <position position="405"/>
    </location>
</feature>
<gene>
    <name evidence="1" type="primary">hcp</name>
    <name type="ordered locus">EcHS_A0977</name>
</gene>
<sequence>MFCVQCEQTIRTPAGNGCSYAQGMCGKTAETSDLQDLLIAALQGLSAWAVKAREYGIINHDVDSFAPRAFFSTLTNVNFDSPRIVGYAREAIALREALKAQCLAVDANARVDNPMADLQLVSDDLGELQRQAAEFTPNKDKAAIGENILGLRLLCLYGLKGAAAYMEHAHVLGQYDNDIYAQYHKIMAWLGTWPADMNALLECSMEIGQMNFKVMSILDAGETGKYGHPTPTQVNVKATAGKCILISGHDLKDLYNLLEQTEGTGVNVYTHGEMLPAHGYPELRKFKHLVGNYGSGWQNQQVEFARFPGPIVMTSNCIIDPTVGAYDDRIWTRSIVGWPGVRHLDGDDFSAVITQAQQMAGFPYSEIPHLITVGFGRQTLLGAADTLIDLVSREKLRHIFLLGGCDGARGERHYFTDFATSVPDDCLILTLACGKYRFNKLEFGDIEGLPRLVDAGQCNDAYSAIILAVTLAEKLGCGVNDLPLSLVLSWFEQKAIVILLTLLSLGVKNIVTGPTAPGFLTPDLLAVLNEKFGLRSITTVEEDMKQLLSA</sequence>
<reference key="1">
    <citation type="journal article" date="2008" name="J. Bacteriol.">
        <title>The pangenome structure of Escherichia coli: comparative genomic analysis of E. coli commensal and pathogenic isolates.</title>
        <authorList>
            <person name="Rasko D.A."/>
            <person name="Rosovitz M.J."/>
            <person name="Myers G.S.A."/>
            <person name="Mongodin E.F."/>
            <person name="Fricke W.F."/>
            <person name="Gajer P."/>
            <person name="Crabtree J."/>
            <person name="Sebaihia M."/>
            <person name="Thomson N.R."/>
            <person name="Chaudhuri R."/>
            <person name="Henderson I.R."/>
            <person name="Sperandio V."/>
            <person name="Ravel J."/>
        </authorList>
    </citation>
    <scope>NUCLEOTIDE SEQUENCE [LARGE SCALE GENOMIC DNA]</scope>
    <source>
        <strain>HS</strain>
    </source>
</reference>
<evidence type="ECO:0000255" key="1">
    <source>
        <dbReference type="HAMAP-Rule" id="MF_00069"/>
    </source>
</evidence>
<name>HCP_ECOHS</name>
<accession>A7ZYH7</accession>
<proteinExistence type="inferred from homology"/>
<keyword id="KW-0001">2Fe-2S</keyword>
<keyword id="KW-0963">Cytoplasm</keyword>
<keyword id="KW-0408">Iron</keyword>
<keyword id="KW-0411">Iron-sulfur</keyword>
<keyword id="KW-0479">Metal-binding</keyword>
<keyword id="KW-0560">Oxidoreductase</keyword>
<comment type="function">
    <text evidence="1">Catalyzes the reduction of hydroxylamine to form NH(3) and H(2)O.</text>
</comment>
<comment type="catalytic activity">
    <reaction evidence="1">
        <text>A + NH4(+) + H2O = hydroxylamine + AH2 + H(+)</text>
        <dbReference type="Rhea" id="RHEA:22052"/>
        <dbReference type="ChEBI" id="CHEBI:13193"/>
        <dbReference type="ChEBI" id="CHEBI:15377"/>
        <dbReference type="ChEBI" id="CHEBI:15378"/>
        <dbReference type="ChEBI" id="CHEBI:15429"/>
        <dbReference type="ChEBI" id="CHEBI:17499"/>
        <dbReference type="ChEBI" id="CHEBI:28938"/>
        <dbReference type="EC" id="1.7.99.1"/>
    </reaction>
</comment>
<comment type="cofactor">
    <cofactor evidence="1">
        <name>[2Fe-2S] cluster</name>
        <dbReference type="ChEBI" id="CHEBI:190135"/>
    </cofactor>
    <text evidence="1">Binds 1 [2Fe-2S] cluster.</text>
</comment>
<comment type="cofactor">
    <cofactor evidence="1">
        <name>hybrid [4Fe-2O-2S] cluster</name>
        <dbReference type="ChEBI" id="CHEBI:60519"/>
    </cofactor>
    <text evidence="1">Binds 1 hybrid [4Fe-2O-2S] cluster.</text>
</comment>
<comment type="subcellular location">
    <subcellularLocation>
        <location evidence="1">Cytoplasm</location>
    </subcellularLocation>
</comment>
<comment type="similarity">
    <text evidence="1">Belongs to the HCP family.</text>
</comment>